<evidence type="ECO:0000250" key="1"/>
<evidence type="ECO:0000305" key="2"/>
<feature type="chain" id="PRO_0000139259" description="Methionine--tRNA ligase">
    <location>
        <begin position="1"/>
        <end position="638"/>
    </location>
</feature>
<feature type="domain" description="tRNA-binding">
    <location>
        <begin position="538"/>
        <end position="638"/>
    </location>
</feature>
<feature type="short sequence motif" description="'HIGH' region">
    <location>
        <begin position="12"/>
        <end position="22"/>
    </location>
</feature>
<feature type="short sequence motif" description="'KMSKS' region">
    <location>
        <begin position="296"/>
        <end position="300"/>
    </location>
</feature>
<feature type="binding site" evidence="1">
    <location>
        <position position="127"/>
    </location>
    <ligand>
        <name>Zn(2+)</name>
        <dbReference type="ChEBI" id="CHEBI:29105"/>
    </ligand>
</feature>
<feature type="binding site" evidence="1">
    <location>
        <position position="130"/>
    </location>
    <ligand>
        <name>Zn(2+)</name>
        <dbReference type="ChEBI" id="CHEBI:29105"/>
    </ligand>
</feature>
<feature type="binding site" evidence="1">
    <location>
        <position position="144"/>
    </location>
    <ligand>
        <name>Zn(2+)</name>
        <dbReference type="ChEBI" id="CHEBI:29105"/>
    </ligand>
</feature>
<feature type="binding site" evidence="1">
    <location>
        <position position="147"/>
    </location>
    <ligand>
        <name>Zn(2+)</name>
        <dbReference type="ChEBI" id="CHEBI:29105"/>
    </ligand>
</feature>
<feature type="binding site" evidence="1">
    <location>
        <position position="299"/>
    </location>
    <ligand>
        <name>ATP</name>
        <dbReference type="ChEBI" id="CHEBI:30616"/>
    </ligand>
</feature>
<sequence length="638" mass="73552">MKKTFYITTPIYYPSDKLHIGHSYTTVAADAMARFKRLTGYDVMFLTGTDEHGQKIQRIAREKGMSPKEYVDGIVEWIKDLWKTMDISYDHFIRTTDAYHEEIVQKIFMKLYEQGDIYKGEYEGWYCTPCESFWTESQLVDGKCPDCGRPVERVTEEGYFFRLSAYGDKLLKYYEEHPDFIQPESRRNEMINFIKAGLEDLFVSRSTFDWGIKVPFDPKHVIYVWIDALSNYITALGYMTENDEKFKKYWPADVHLVGKEIVRFHTIIWPAMLMALGLPLPKKVFGHGWLILEGGKMSKSKGNVVDPKELVDRYGVDAIRYFLLREVPFGADGVFSNEALINRINSDLANDLGNLLSRTVTMIEKYFDGVLPKPSSQEEIDEDLINVAQNLPQKVEEYMDKLQFSNALIEIWKLVSRANKYIDETMPWVLAKDESKRGRLGTVLYNLAESLRFIGILISPFMPNTPKKMFEQLGITEDLTTWESLKFGLLKEGTRVKRGEILFPRIDVEKELASLEKKTEEKTKETKEEKIDYITIEDFSKVQLRVAEILEAEKVEGSDKLIKMKLKVGEEIRQIVGGIGKYYSPEELIGKKIIIVYNLQPRKLMGIESQGMLLAATNEGKMALLTVDKDIESGSKIS</sequence>
<dbReference type="EC" id="6.1.1.10"/>
<dbReference type="EMBL" id="AE008691">
    <property type="protein sequence ID" value="AAM23414.1"/>
    <property type="molecule type" value="Genomic_DNA"/>
</dbReference>
<dbReference type="RefSeq" id="WP_011024619.1">
    <property type="nucleotide sequence ID" value="NC_003869.1"/>
</dbReference>
<dbReference type="SMR" id="Q8RDD1"/>
<dbReference type="STRING" id="273068.TTE0110"/>
<dbReference type="KEGG" id="tte:TTE0110"/>
<dbReference type="eggNOG" id="COG0073">
    <property type="taxonomic scope" value="Bacteria"/>
</dbReference>
<dbReference type="eggNOG" id="COG0143">
    <property type="taxonomic scope" value="Bacteria"/>
</dbReference>
<dbReference type="HOGENOM" id="CLU_009710_9_4_9"/>
<dbReference type="OrthoDB" id="9810191at2"/>
<dbReference type="Proteomes" id="UP000000555">
    <property type="component" value="Chromosome"/>
</dbReference>
<dbReference type="GO" id="GO:0005737">
    <property type="term" value="C:cytoplasm"/>
    <property type="evidence" value="ECO:0007669"/>
    <property type="project" value="UniProtKB-SubCell"/>
</dbReference>
<dbReference type="GO" id="GO:0005524">
    <property type="term" value="F:ATP binding"/>
    <property type="evidence" value="ECO:0007669"/>
    <property type="project" value="UniProtKB-UniRule"/>
</dbReference>
<dbReference type="GO" id="GO:0046872">
    <property type="term" value="F:metal ion binding"/>
    <property type="evidence" value="ECO:0007669"/>
    <property type="project" value="UniProtKB-KW"/>
</dbReference>
<dbReference type="GO" id="GO:0004825">
    <property type="term" value="F:methionine-tRNA ligase activity"/>
    <property type="evidence" value="ECO:0007669"/>
    <property type="project" value="UniProtKB-UniRule"/>
</dbReference>
<dbReference type="GO" id="GO:0000049">
    <property type="term" value="F:tRNA binding"/>
    <property type="evidence" value="ECO:0007669"/>
    <property type="project" value="UniProtKB-KW"/>
</dbReference>
<dbReference type="GO" id="GO:0006431">
    <property type="term" value="P:methionyl-tRNA aminoacylation"/>
    <property type="evidence" value="ECO:0007669"/>
    <property type="project" value="UniProtKB-UniRule"/>
</dbReference>
<dbReference type="CDD" id="cd07957">
    <property type="entry name" value="Anticodon_Ia_Met"/>
    <property type="match status" value="1"/>
</dbReference>
<dbReference type="CDD" id="cd00814">
    <property type="entry name" value="MetRS_core"/>
    <property type="match status" value="1"/>
</dbReference>
<dbReference type="CDD" id="cd02800">
    <property type="entry name" value="tRNA_bind_EcMetRS_like"/>
    <property type="match status" value="1"/>
</dbReference>
<dbReference type="FunFam" id="1.10.730.10:FF:000026">
    <property type="entry name" value="Methionine--tRNA ligase"/>
    <property type="match status" value="1"/>
</dbReference>
<dbReference type="FunFam" id="2.170.220.10:FF:000002">
    <property type="entry name" value="Methionine--tRNA ligase"/>
    <property type="match status" value="1"/>
</dbReference>
<dbReference type="FunFam" id="2.40.50.140:FF:000042">
    <property type="entry name" value="Methionine--tRNA ligase"/>
    <property type="match status" value="1"/>
</dbReference>
<dbReference type="Gene3D" id="2.170.220.10">
    <property type="match status" value="1"/>
</dbReference>
<dbReference type="Gene3D" id="3.40.50.620">
    <property type="entry name" value="HUPs"/>
    <property type="match status" value="1"/>
</dbReference>
<dbReference type="Gene3D" id="1.10.730.10">
    <property type="entry name" value="Isoleucyl-tRNA Synthetase, Domain 1"/>
    <property type="match status" value="1"/>
</dbReference>
<dbReference type="Gene3D" id="2.40.50.140">
    <property type="entry name" value="Nucleic acid-binding proteins"/>
    <property type="match status" value="1"/>
</dbReference>
<dbReference type="HAMAP" id="MF_01228">
    <property type="entry name" value="Met_tRNA_synth_type2"/>
    <property type="match status" value="1"/>
</dbReference>
<dbReference type="InterPro" id="IPR001412">
    <property type="entry name" value="aa-tRNA-synth_I_CS"/>
</dbReference>
<dbReference type="InterPro" id="IPR041872">
    <property type="entry name" value="Anticodon_Met"/>
</dbReference>
<dbReference type="InterPro" id="IPR004495">
    <property type="entry name" value="Met-tRNA-synth_bsu_C"/>
</dbReference>
<dbReference type="InterPro" id="IPR014758">
    <property type="entry name" value="Met-tRNA_synth"/>
</dbReference>
<dbReference type="InterPro" id="IPR023457">
    <property type="entry name" value="Met-tRNA_synth_2"/>
</dbReference>
<dbReference type="InterPro" id="IPR015413">
    <property type="entry name" value="Methionyl/Leucyl_tRNA_Synth"/>
</dbReference>
<dbReference type="InterPro" id="IPR033911">
    <property type="entry name" value="MetRS_core"/>
</dbReference>
<dbReference type="InterPro" id="IPR012340">
    <property type="entry name" value="NA-bd_OB-fold"/>
</dbReference>
<dbReference type="InterPro" id="IPR014729">
    <property type="entry name" value="Rossmann-like_a/b/a_fold"/>
</dbReference>
<dbReference type="InterPro" id="IPR002547">
    <property type="entry name" value="tRNA-bd_dom"/>
</dbReference>
<dbReference type="InterPro" id="IPR009080">
    <property type="entry name" value="tRNAsynth_Ia_anticodon-bd"/>
</dbReference>
<dbReference type="NCBIfam" id="TIGR00398">
    <property type="entry name" value="metG"/>
    <property type="match status" value="1"/>
</dbReference>
<dbReference type="NCBIfam" id="TIGR00399">
    <property type="entry name" value="metG_C_term"/>
    <property type="match status" value="1"/>
</dbReference>
<dbReference type="NCBIfam" id="NF008900">
    <property type="entry name" value="PRK12267.1"/>
    <property type="match status" value="1"/>
</dbReference>
<dbReference type="PANTHER" id="PTHR43326:SF1">
    <property type="entry name" value="METHIONINE--TRNA LIGASE, MITOCHONDRIAL"/>
    <property type="match status" value="1"/>
</dbReference>
<dbReference type="PANTHER" id="PTHR43326">
    <property type="entry name" value="METHIONYL-TRNA SYNTHETASE"/>
    <property type="match status" value="1"/>
</dbReference>
<dbReference type="Pfam" id="PF19303">
    <property type="entry name" value="Anticodon_3"/>
    <property type="match status" value="1"/>
</dbReference>
<dbReference type="Pfam" id="PF09334">
    <property type="entry name" value="tRNA-synt_1g"/>
    <property type="match status" value="2"/>
</dbReference>
<dbReference type="Pfam" id="PF01588">
    <property type="entry name" value="tRNA_bind"/>
    <property type="match status" value="1"/>
</dbReference>
<dbReference type="PRINTS" id="PR01041">
    <property type="entry name" value="TRNASYNTHMET"/>
</dbReference>
<dbReference type="SUPFAM" id="SSF47323">
    <property type="entry name" value="Anticodon-binding domain of a subclass of class I aminoacyl-tRNA synthetases"/>
    <property type="match status" value="1"/>
</dbReference>
<dbReference type="SUPFAM" id="SSF50249">
    <property type="entry name" value="Nucleic acid-binding proteins"/>
    <property type="match status" value="1"/>
</dbReference>
<dbReference type="SUPFAM" id="SSF52374">
    <property type="entry name" value="Nucleotidylyl transferase"/>
    <property type="match status" value="1"/>
</dbReference>
<dbReference type="PROSITE" id="PS00178">
    <property type="entry name" value="AA_TRNA_LIGASE_I"/>
    <property type="match status" value="1"/>
</dbReference>
<dbReference type="PROSITE" id="PS50886">
    <property type="entry name" value="TRBD"/>
    <property type="match status" value="1"/>
</dbReference>
<protein>
    <recommendedName>
        <fullName>Methionine--tRNA ligase</fullName>
        <ecNumber>6.1.1.10</ecNumber>
    </recommendedName>
    <alternativeName>
        <fullName>Methionyl-tRNA synthetase</fullName>
        <shortName>MetRS</shortName>
    </alternativeName>
</protein>
<keyword id="KW-0030">Aminoacyl-tRNA synthetase</keyword>
<keyword id="KW-0067">ATP-binding</keyword>
<keyword id="KW-0963">Cytoplasm</keyword>
<keyword id="KW-0436">Ligase</keyword>
<keyword id="KW-0479">Metal-binding</keyword>
<keyword id="KW-0547">Nucleotide-binding</keyword>
<keyword id="KW-0648">Protein biosynthesis</keyword>
<keyword id="KW-1185">Reference proteome</keyword>
<keyword id="KW-0694">RNA-binding</keyword>
<keyword id="KW-0820">tRNA-binding</keyword>
<keyword id="KW-0862">Zinc</keyword>
<accession>Q8RDD1</accession>
<gene>
    <name type="primary">metG</name>
    <name type="ordered locus">TTE0110</name>
</gene>
<proteinExistence type="inferred from homology"/>
<name>SYM_CALS4</name>
<organism>
    <name type="scientific">Caldanaerobacter subterraneus subsp. tengcongensis (strain DSM 15242 / JCM 11007 / NBRC 100824 / MB4)</name>
    <name type="common">Thermoanaerobacter tengcongensis</name>
    <dbReference type="NCBI Taxonomy" id="273068"/>
    <lineage>
        <taxon>Bacteria</taxon>
        <taxon>Bacillati</taxon>
        <taxon>Bacillota</taxon>
        <taxon>Clostridia</taxon>
        <taxon>Thermoanaerobacterales</taxon>
        <taxon>Thermoanaerobacteraceae</taxon>
        <taxon>Caldanaerobacter</taxon>
    </lineage>
</organism>
<comment type="function">
    <text evidence="1">Is required not only for elongation of protein synthesis but also for the initiation of all mRNA translation through initiator tRNA(fMet) aminoacylation.</text>
</comment>
<comment type="catalytic activity">
    <reaction>
        <text>tRNA(Met) + L-methionine + ATP = L-methionyl-tRNA(Met) + AMP + diphosphate</text>
        <dbReference type="Rhea" id="RHEA:13481"/>
        <dbReference type="Rhea" id="RHEA-COMP:9667"/>
        <dbReference type="Rhea" id="RHEA-COMP:9698"/>
        <dbReference type="ChEBI" id="CHEBI:30616"/>
        <dbReference type="ChEBI" id="CHEBI:33019"/>
        <dbReference type="ChEBI" id="CHEBI:57844"/>
        <dbReference type="ChEBI" id="CHEBI:78442"/>
        <dbReference type="ChEBI" id="CHEBI:78530"/>
        <dbReference type="ChEBI" id="CHEBI:456215"/>
        <dbReference type="EC" id="6.1.1.10"/>
    </reaction>
</comment>
<comment type="cofactor">
    <cofactor evidence="1">
        <name>Zn(2+)</name>
        <dbReference type="ChEBI" id="CHEBI:29105"/>
    </cofactor>
    <text evidence="1">Binds 1 zinc ion per subunit.</text>
</comment>
<comment type="subunit">
    <text evidence="1">Homodimer.</text>
</comment>
<comment type="subcellular location">
    <subcellularLocation>
        <location evidence="1">Cytoplasm</location>
    </subcellularLocation>
</comment>
<comment type="similarity">
    <text evidence="2">Belongs to the class-I aminoacyl-tRNA synthetase family. MetG type 2A subfamily.</text>
</comment>
<reference key="1">
    <citation type="journal article" date="2002" name="Genome Res.">
        <title>A complete sequence of the T. tengcongensis genome.</title>
        <authorList>
            <person name="Bao Q."/>
            <person name="Tian Y."/>
            <person name="Li W."/>
            <person name="Xu Z."/>
            <person name="Xuan Z."/>
            <person name="Hu S."/>
            <person name="Dong W."/>
            <person name="Yang J."/>
            <person name="Chen Y."/>
            <person name="Xue Y."/>
            <person name="Xu Y."/>
            <person name="Lai X."/>
            <person name="Huang L."/>
            <person name="Dong X."/>
            <person name="Ma Y."/>
            <person name="Ling L."/>
            <person name="Tan H."/>
            <person name="Chen R."/>
            <person name="Wang J."/>
            <person name="Yu J."/>
            <person name="Yang H."/>
        </authorList>
    </citation>
    <scope>NUCLEOTIDE SEQUENCE [LARGE SCALE GENOMIC DNA]</scope>
    <source>
        <strain>DSM 15242 / JCM 11007 / NBRC 100824 / MB4</strain>
    </source>
</reference>